<proteinExistence type="evidence at protein level"/>
<evidence type="ECO:0000250" key="1"/>
<evidence type="ECO:0000255" key="2">
    <source>
        <dbReference type="PROSITE-ProRule" id="PRU00159"/>
    </source>
</evidence>
<evidence type="ECO:0000255" key="3">
    <source>
        <dbReference type="PROSITE-ProRule" id="PRU10027"/>
    </source>
</evidence>
<evidence type="ECO:0000256" key="4">
    <source>
        <dbReference type="SAM" id="MobiDB-lite"/>
    </source>
</evidence>
<evidence type="ECO:0000269" key="5">
    <source>
    </source>
</evidence>
<evidence type="ECO:0000269" key="6">
    <source>
    </source>
</evidence>
<evidence type="ECO:0000269" key="7">
    <source>
    </source>
</evidence>
<evidence type="ECO:0000269" key="8">
    <source>
    </source>
</evidence>
<evidence type="ECO:0000269" key="9">
    <source>
    </source>
</evidence>
<evidence type="ECO:0000269" key="10">
    <source>
    </source>
</evidence>
<evidence type="ECO:0000269" key="11">
    <source>
    </source>
</evidence>
<evidence type="ECO:0000269" key="12">
    <source>
    </source>
</evidence>
<evidence type="ECO:0000269" key="13">
    <source>
    </source>
</evidence>
<evidence type="ECO:0000269" key="14">
    <source>
    </source>
</evidence>
<evidence type="ECO:0000269" key="15">
    <source>
    </source>
</evidence>
<evidence type="ECO:0000269" key="16">
    <source>
    </source>
</evidence>
<evidence type="ECO:0000269" key="17">
    <source>
    </source>
</evidence>
<evidence type="ECO:0000269" key="18">
    <source>
    </source>
</evidence>
<evidence type="ECO:0000269" key="19">
    <source>
    </source>
</evidence>
<evidence type="ECO:0000269" key="20">
    <source>
    </source>
</evidence>
<evidence type="ECO:0000269" key="21">
    <source>
    </source>
</evidence>
<evidence type="ECO:0000269" key="22">
    <source>
    </source>
</evidence>
<evidence type="ECO:0000269" key="23">
    <source>
    </source>
</evidence>
<evidence type="ECO:0000269" key="24">
    <source>
    </source>
</evidence>
<evidence type="ECO:0000269" key="25">
    <source>
    </source>
</evidence>
<evidence type="ECO:0000269" key="26">
    <source>
    </source>
</evidence>
<evidence type="ECO:0000269" key="27">
    <source>
    </source>
</evidence>
<evidence type="ECO:0000269" key="28">
    <source>
    </source>
</evidence>
<evidence type="ECO:0000269" key="29">
    <source>
    </source>
</evidence>
<evidence type="ECO:0000269" key="30">
    <source>
    </source>
</evidence>
<evidence type="ECO:0000269" key="31">
    <source>
    </source>
</evidence>
<evidence type="ECO:0007744" key="32">
    <source>
    </source>
</evidence>
<evidence type="ECO:0007744" key="33">
    <source>
    </source>
</evidence>
<feature type="chain" id="PRO_0000086727" description="Mitosis inhibitor protein kinase SWE1">
    <location>
        <begin position="1"/>
        <end position="819"/>
    </location>
</feature>
<feature type="domain" description="Protein kinase" evidence="2">
    <location>
        <begin position="444"/>
        <end position="794"/>
    </location>
</feature>
<feature type="region of interest" description="Disordered" evidence="4">
    <location>
        <begin position="86"/>
        <end position="105"/>
    </location>
</feature>
<feature type="region of interest" description="Disordered" evidence="4">
    <location>
        <begin position="117"/>
        <end position="168"/>
    </location>
</feature>
<feature type="region of interest" description="Disordered" evidence="4">
    <location>
        <begin position="278"/>
        <end position="297"/>
    </location>
</feature>
<feature type="region of interest" description="Disordered" evidence="4">
    <location>
        <begin position="341"/>
        <end position="395"/>
    </location>
</feature>
<feature type="region of interest" description="Disordered" evidence="4">
    <location>
        <begin position="707"/>
        <end position="736"/>
    </location>
</feature>
<feature type="compositionally biased region" description="Acidic residues" evidence="4">
    <location>
        <begin position="88"/>
        <end position="102"/>
    </location>
</feature>
<feature type="compositionally biased region" description="Polar residues" evidence="4">
    <location>
        <begin position="118"/>
        <end position="142"/>
    </location>
</feature>
<feature type="compositionally biased region" description="Polar residues" evidence="4">
    <location>
        <begin position="707"/>
        <end position="716"/>
    </location>
</feature>
<feature type="compositionally biased region" description="Low complexity" evidence="4">
    <location>
        <begin position="717"/>
        <end position="736"/>
    </location>
</feature>
<feature type="active site" description="Proton acceptor" evidence="2 3">
    <location>
        <position position="579"/>
    </location>
</feature>
<feature type="binding site" evidence="2">
    <location>
        <begin position="450"/>
        <end position="458"/>
    </location>
    <ligand>
        <name>ATP</name>
        <dbReference type="ChEBI" id="CHEBI:30616"/>
    </ligand>
</feature>
<feature type="binding site" evidence="2">
    <location>
        <position position="473"/>
    </location>
    <ligand>
        <name>ATP</name>
        <dbReference type="ChEBI" id="CHEBI:30616"/>
    </ligand>
</feature>
<feature type="binding site" evidence="1">
    <location>
        <position position="584"/>
    </location>
    <ligand>
        <name>Mg(2+)</name>
        <dbReference type="ChEBI" id="CHEBI:18420"/>
    </ligand>
</feature>
<feature type="binding site" evidence="1">
    <location>
        <position position="597"/>
    </location>
    <ligand>
        <name>Mg(2+)</name>
        <dbReference type="ChEBI" id="CHEBI:18420"/>
    </ligand>
</feature>
<feature type="modified residue" description="Phosphoserine; by CDC5" evidence="19 23">
    <location>
        <position position="36"/>
    </location>
</feature>
<feature type="modified residue" description="Phosphothreonine; by CDC28" evidence="23">
    <location>
        <position position="45"/>
    </location>
</feature>
<feature type="modified residue" description="Phosphoserine; by CDC28" evidence="23">
    <location>
        <position position="56"/>
    </location>
</feature>
<feature type="modified residue" description="Phosphoserine; by CDC28" evidence="23">
    <location>
        <position position="63"/>
    </location>
</feature>
<feature type="modified residue" description="Phosphoserine" evidence="23">
    <location>
        <position position="70"/>
    </location>
</feature>
<feature type="modified residue" description="Phosphothreonine; by CDC28" evidence="23">
    <location>
        <position position="74"/>
    </location>
</feature>
<feature type="modified residue" description="Phosphoserine; by CDC5" evidence="19">
    <location>
        <position position="102"/>
    </location>
</feature>
<feature type="modified residue" description="Phosphoserine; by CDC28" evidence="23">
    <location>
        <position position="105"/>
    </location>
</feature>
<feature type="modified residue" description="Phosphoserine; by CDC5, CDC28 and CLA4" evidence="19 23">
    <location>
        <position position="111"/>
    </location>
</feature>
<feature type="modified residue" description="Phosphoserine; by CDC5" evidence="19 23">
    <location>
        <position position="118"/>
    </location>
</feature>
<feature type="modified residue" description="Phosphothreonine; by CDC28" evidence="23">
    <location>
        <position position="121"/>
    </location>
</feature>
<feature type="modified residue" description="Phosphothreonine; by CDC28" evidence="23">
    <location>
        <position position="124"/>
    </location>
</feature>
<feature type="modified residue" description="Phosphoserine; by CDC28" evidence="23">
    <location>
        <position position="127"/>
    </location>
</feature>
<feature type="modified residue" description="Phosphothreonine; by CDC5" evidence="19">
    <location>
        <position position="131"/>
    </location>
</feature>
<feature type="modified residue" description="Phosphoserine; by CDC28" evidence="23">
    <location>
        <position position="133"/>
    </location>
</feature>
<feature type="modified residue" description="Phosphoserine; by CDC28 and CLA4" evidence="19 23">
    <location>
        <position position="136"/>
    </location>
</feature>
<feature type="modified residue" description="Phosphoserine; by CDC5" evidence="19">
    <location>
        <position position="156"/>
    </location>
</feature>
<feature type="modified residue" description="Phosphoserine; by CDC5" evidence="19">
    <location>
        <position position="169"/>
    </location>
</feature>
<feature type="modified residue" description="Phosphothreonine; by CDC28" evidence="23">
    <location>
        <position position="196"/>
    </location>
</feature>
<feature type="modified residue" description="Phosphoserine; by CDC28" evidence="23">
    <location>
        <position position="201"/>
    </location>
</feature>
<feature type="modified residue" description="Phosphoserine; by CDC5" evidence="19">
    <location>
        <position position="225"/>
    </location>
</feature>
<feature type="modified residue" description="Phosphoserine; by CDC5" evidence="19">
    <location>
        <position position="254"/>
    </location>
</feature>
<feature type="modified residue" description="Phosphoserine" evidence="23">
    <location>
        <position position="262"/>
    </location>
</feature>
<feature type="modified residue" description="Phosphoserine; by CDC28" evidence="23">
    <location>
        <position position="263"/>
    </location>
</feature>
<feature type="modified residue" description="Phosphoserine; by CDC28" evidence="23">
    <location>
        <position position="266"/>
    </location>
</feature>
<feature type="modified residue" description="Phosphothreonine; by CDC5" evidence="19">
    <location>
        <position position="280"/>
    </location>
</feature>
<feature type="modified residue" description="Phosphoserine" evidence="23">
    <location>
        <position position="284"/>
    </location>
</feature>
<feature type="modified residue" description="Phosphoserine" evidence="23">
    <location>
        <position position="294"/>
    </location>
</feature>
<feature type="modified residue" description="Phosphoserine; by CLA4" evidence="19">
    <location>
        <position position="312"/>
    </location>
</feature>
<feature type="modified residue" description="Phosphoserine" evidence="23">
    <location>
        <position position="345"/>
    </location>
</feature>
<feature type="modified residue" description="Phosphothreonine; by CDC28" evidence="23">
    <location>
        <position position="367"/>
    </location>
</feature>
<feature type="modified residue" description="Phosphothreonine; by CDC28" evidence="23">
    <location>
        <position position="373"/>
    </location>
</feature>
<feature type="modified residue" description="Phosphoserine; by CDC5 and CLA4" evidence="19 23 32">
    <location>
        <position position="379"/>
    </location>
</feature>
<feature type="modified residue" description="Phosphothreonine; by CDC28" evidence="23">
    <location>
        <position position="384"/>
    </location>
</feature>
<feature type="modified residue" description="Phosphoserine; by CDC5 and CLA4" evidence="19">
    <location>
        <position position="395"/>
    </location>
</feature>
<feature type="modified residue" description="Phosphoserine; by CDC5 and CLA4" evidence="19">
    <location>
        <position position="438"/>
    </location>
</feature>
<feature type="modified residue" description="Phosphoserine; by CDC5" evidence="19 23">
    <location>
        <position position="610"/>
    </location>
</feature>
<feature type="modified residue" description="Phosphothreonine; by CDC5" evidence="19">
    <location>
        <position position="629"/>
    </location>
</feature>
<feature type="modified residue" description="Phosphothreonine; by CDC5 and CLA4" evidence="19">
    <location>
        <position position="688"/>
    </location>
</feature>
<feature type="modified residue" description="Phosphothreonine" evidence="23">
    <location>
        <position position="692"/>
    </location>
</feature>
<feature type="cross-link" description="Glycyl lysine isopeptide (Lys-Gly) (interchain with G-Cter in ubiquitin)" evidence="33">
    <location>
        <position position="741"/>
    </location>
</feature>
<feature type="mutagenesis site" description="Impairs interaction with HSL7 and prevents bud neck localization and degradation." evidence="13">
    <location>
        <begin position="318"/>
        <end position="328"/>
    </location>
</feature>
<feature type="mutagenesis site" description="Prevents degradation." evidence="13">
    <original>L</original>
    <variation>P</variation>
    <variation>Q</variation>
    <location>
        <position position="320"/>
    </location>
</feature>
<feature type="mutagenesis site" description="Prevents degradation." evidence="13">
    <original>L</original>
    <variation>S</variation>
    <location>
        <position position="324"/>
    </location>
</feature>
<feature type="mutagenesis site" description="Prevents degradation." evidence="13">
    <original>F</original>
    <variation>S</variation>
    <location>
        <position position="327"/>
    </location>
</feature>
<feature type="mutagenesis site" description="Prevents degradation." evidence="13">
    <original>K</original>
    <variation>E</variation>
    <location>
        <position position="328"/>
    </location>
</feature>
<feature type="mutagenesis site" description="Prevents degradation." evidence="13">
    <original>L</original>
    <variation>I</variation>
    <location>
        <position position="331"/>
    </location>
</feature>
<feature type="mutagenesis site" description="Prevents degradation." evidence="13">
    <original>Y</original>
    <variation>C</variation>
    <location>
        <position position="332"/>
    </location>
</feature>
<feature type="mutagenesis site" description="Loss of catalytic activity." evidence="5">
    <original>K</original>
    <variation>A</variation>
    <variation>P</variation>
    <location>
        <position position="473"/>
    </location>
</feature>
<feature type="mutagenesis site" description="Prevents degradation." evidence="13">
    <original>E</original>
    <variation>K</variation>
    <variation>V</variation>
    <variation>G</variation>
    <location>
        <position position="797"/>
    </location>
</feature>
<feature type="mutagenesis site" description="Prevents degradation." evidence="13">
    <original>I</original>
    <variation>T</variation>
    <variation>A</variation>
    <variation>N</variation>
    <location>
        <position position="806"/>
    </location>
</feature>
<feature type="mutagenesis site" description="Prevents degradation." evidence="13">
    <original>Q</original>
    <variation>R</variation>
    <variation>E</variation>
    <location>
        <position position="807"/>
    </location>
</feature>
<name>SWE1_YEAST</name>
<accession>P32944</accession>
<accession>D6VW03</accession>
<reference key="1">
    <citation type="journal article" date="1993" name="EMBO J.">
        <title>Properties of Saccharomyces cerevisiae wee1 and its differential regulation of p34CDC28 in response to G1 and G2 cyclins.</title>
        <authorList>
            <person name="Booher R.N."/>
            <person name="Deshaies R.J."/>
            <person name="Kirschner M.W."/>
        </authorList>
    </citation>
    <scope>NUCLEOTIDE SEQUENCE [GENOMIC DNA]</scope>
    <scope>FUNCTION</scope>
    <scope>PHOSPHORYLATION OF CDC28</scope>
</reference>
<reference key="2">
    <citation type="journal article" date="1996" name="EMBO J.">
        <title>Complete nucleotide sequence of Saccharomyces cerevisiae chromosome X.</title>
        <authorList>
            <person name="Galibert F."/>
            <person name="Alexandraki D."/>
            <person name="Baur A."/>
            <person name="Boles E."/>
            <person name="Chalwatzis N."/>
            <person name="Chuat J.-C."/>
            <person name="Coster F."/>
            <person name="Cziepluch C."/>
            <person name="de Haan M."/>
            <person name="Domdey H."/>
            <person name="Durand P."/>
            <person name="Entian K.-D."/>
            <person name="Gatius M."/>
            <person name="Goffeau A."/>
            <person name="Grivell L.A."/>
            <person name="Hennemann A."/>
            <person name="Herbert C.J."/>
            <person name="Heumann K."/>
            <person name="Hilger F."/>
            <person name="Hollenberg C.P."/>
            <person name="Huang M.-E."/>
            <person name="Jacq C."/>
            <person name="Jauniaux J.-C."/>
            <person name="Katsoulou C."/>
            <person name="Kirchrath L."/>
            <person name="Kleine K."/>
            <person name="Kordes E."/>
            <person name="Koetter P."/>
            <person name="Liebl S."/>
            <person name="Louis E.J."/>
            <person name="Manus V."/>
            <person name="Mewes H.-W."/>
            <person name="Miosga T."/>
            <person name="Obermaier B."/>
            <person name="Perea J."/>
            <person name="Pohl T.M."/>
            <person name="Portetelle D."/>
            <person name="Pujol A."/>
            <person name="Purnelle B."/>
            <person name="Ramezani Rad M."/>
            <person name="Rasmussen S.W."/>
            <person name="Rose M."/>
            <person name="Rossau R."/>
            <person name="Schaaff-Gerstenschlaeger I."/>
            <person name="Smits P.H.M."/>
            <person name="Scarcez T."/>
            <person name="Soriano N."/>
            <person name="To Van D."/>
            <person name="Tzermia M."/>
            <person name="Van Broekhoven A."/>
            <person name="Vandenbol M."/>
            <person name="Wedler H."/>
            <person name="von Wettstein D."/>
            <person name="Wambutt R."/>
            <person name="Zagulski M."/>
            <person name="Zollner A."/>
            <person name="Karpfinger-Hartl L."/>
        </authorList>
    </citation>
    <scope>NUCLEOTIDE SEQUENCE [LARGE SCALE GENOMIC DNA]</scope>
    <source>
        <strain>ATCC 204508 / S288c</strain>
    </source>
</reference>
<reference key="3">
    <citation type="journal article" date="2014" name="G3 (Bethesda)">
        <title>The reference genome sequence of Saccharomyces cerevisiae: Then and now.</title>
        <authorList>
            <person name="Engel S.R."/>
            <person name="Dietrich F.S."/>
            <person name="Fisk D.G."/>
            <person name="Binkley G."/>
            <person name="Balakrishnan R."/>
            <person name="Costanzo M.C."/>
            <person name="Dwight S.S."/>
            <person name="Hitz B.C."/>
            <person name="Karra K."/>
            <person name="Nash R.S."/>
            <person name="Weng S."/>
            <person name="Wong E.D."/>
            <person name="Lloyd P."/>
            <person name="Skrzypek M.S."/>
            <person name="Miyasato S.R."/>
            <person name="Simison M."/>
            <person name="Cherry J.M."/>
        </authorList>
    </citation>
    <scope>GENOME REANNOTATION</scope>
    <source>
        <strain>ATCC 204508 / S288c</strain>
    </source>
</reference>
<reference key="4">
    <citation type="journal article" date="1996" name="Genes Dev.">
        <title>A search for proteins that interact genetically with histone H3 and H4 amino termini uncovers novel regulators of the Swe1 kinase in Saccharomyces cerevisiae.</title>
        <authorList>
            <person name="Ma X.-J."/>
            <person name="Lu Q."/>
            <person name="Grunstein M."/>
        </authorList>
    </citation>
    <scope>INDUCTION</scope>
</reference>
<reference key="5">
    <citation type="journal article" date="1996" name="Mol. Biol. Cell">
        <title>Cdc28 tyrosine phosphorylation and the morphogenesis checkpoint in budding yeast.</title>
        <authorList>
            <person name="Sia R.A.L."/>
            <person name="Herald H.A."/>
            <person name="Lew D.J."/>
        </authorList>
    </citation>
    <scope>FUNCTION</scope>
    <scope>INDUCTION</scope>
</reference>
<reference key="6">
    <citation type="journal article" date="1998" name="EMBO J.">
        <title>Control of Swe1p degradation by the morphogenesis checkpoint.</title>
        <authorList>
            <person name="Sia R.A.L."/>
            <person name="Bardes E.S.G."/>
            <person name="Lew D.J."/>
        </authorList>
    </citation>
    <scope>FUNCTION</scope>
    <scope>PHOSPHORYLATION</scope>
    <scope>INDUCTION</scope>
</reference>
<reference key="7">
    <citation type="journal article" date="1998" name="Genes Dev.">
        <title>Cdc34 and the F-box protein Met30 are required for degradation of the Cdk-inhibitory kinase Swe1.</title>
        <authorList>
            <person name="Kaiser P."/>
            <person name="Sia R.A.L."/>
            <person name="Bardes E.S.G."/>
            <person name="Lew D.J."/>
            <person name="Reed S.I."/>
        </authorList>
    </citation>
    <scope>INTERACTION WITH MET30</scope>
    <scope>UBIQUITINATION</scope>
</reference>
<reference key="8">
    <citation type="journal article" date="1999" name="Mol. Cell">
        <title>The pachytene checkpoint in S. cerevisiae depends on Swe1-mediated phosphorylation of the cyclin-dependent kinase Cdc28.</title>
        <authorList>
            <person name="Leu J.-Y."/>
            <person name="Roeder G.S."/>
        </authorList>
    </citation>
    <scope>FUNCTION IN MEIOSIS</scope>
    <scope>INDUCTION</scope>
</reference>
<reference key="9">
    <citation type="journal article" date="1999" name="Mol. Cell. Biol.">
        <title>Phosphorylation-independent inhibition of Cdc28p by the tyrosine kinase Swe1p in the morphogenesis checkpoint.</title>
        <authorList>
            <person name="McMillan J.N."/>
            <person name="Sia R.A.L."/>
            <person name="Bardes E.S.G."/>
            <person name="Lew D.J."/>
        </authorList>
    </citation>
    <scope>FUNCTION</scope>
    <scope>MUTAGENESIS OF LYS-473</scope>
</reference>
<reference key="10">
    <citation type="journal article" date="1999" name="Mol. Cell. Biol.">
        <title>The morphogenesis checkpoint in Saccharomyces cerevisiae: cell cycle control of Swe1p degradation by Hsl1p and Hsl7p.</title>
        <authorList>
            <person name="McMillan J.N."/>
            <person name="Longtine M.S."/>
            <person name="Sia R.A.L."/>
            <person name="Theesfeld C.L."/>
            <person name="Bardes E.S.G."/>
            <person name="Pringle J.R."/>
            <person name="Lew D.J."/>
        </authorList>
    </citation>
    <scope>FUNCTION</scope>
    <scope>INTERACTION WITH HSL7</scope>
</reference>
<reference key="11">
    <citation type="journal article" date="1999" name="Mol. Cell. Biol.">
        <title>Hsl7 localizes to a septin ring and serves as an adapter in a regulatory pathway that relieves tyrosine phosphorylation of Cdc28 protein kinase in Saccharomyces cerevisiae.</title>
        <authorList>
            <person name="Shulewitz M.J."/>
            <person name="Inouye C.J."/>
            <person name="Thorner J."/>
        </authorList>
    </citation>
    <scope>FUNCTION</scope>
    <scope>INTERACTION WITH HSL7</scope>
</reference>
<reference key="12">
    <citation type="journal article" date="2000" name="Mol. Cell. Biol.">
        <title>Septin-dependent assembly of a cell cycle-regulatory module in Saccharomyces cerevisiae.</title>
        <authorList>
            <person name="Longtine M.S."/>
            <person name="Theesfeld C.L."/>
            <person name="McMillan J.N."/>
            <person name="Weaver E."/>
            <person name="Pringle J.R."/>
            <person name="Lew D.J."/>
        </authorList>
    </citation>
    <scope>SUBCELLULAR LOCATION</scope>
</reference>
<reference key="13">
    <citation type="journal article" date="2001" name="Genetics">
        <title>A role for the Swe1 checkpoint kinase during filamentous growth of Saccharomyces cerevisiae.</title>
        <authorList>
            <person name="La Valle R."/>
            <person name="Wittenberg C."/>
        </authorList>
    </citation>
    <scope>FUNCTION</scope>
</reference>
<reference key="14">
    <citation type="journal article" date="2001" name="Mol. Biol. Cell">
        <title>Dynamic localization of the Swe1 regulator Hsl7 during the Saccharomyces cerevisiae cell cycle.</title>
        <authorList>
            <person name="Cid V.J."/>
            <person name="Shulewitz M.J."/>
            <person name="McDonald K.L."/>
            <person name="Thorner J."/>
        </authorList>
    </citation>
    <scope>INTERACTION WITH HSL7</scope>
</reference>
<reference key="15">
    <citation type="journal article" date="2001" name="Mol. Cell. Biol.">
        <title>Cdc5 interacts with the Wee1 kinase in budding yeast.</title>
        <authorList>
            <person name="Bartholomew C.R."/>
            <person name="Woo S.H."/>
            <person name="Chung Y.S."/>
            <person name="Jones C."/>
            <person name="Hardy C.F."/>
        </authorList>
    </citation>
    <scope>INTERACTION WITH CDC5</scope>
    <scope>SUBCELLULAR LOCATION</scope>
</reference>
<reference key="16">
    <citation type="journal article" date="2001" name="Nat. Cell Biol.">
        <title>A role for the Pkc1p/Mpk1p kinase cascade in the morphogenesis checkpoint.</title>
        <authorList>
            <person name="Harrison J.C."/>
            <person name="Bardes E.S.G."/>
            <person name="Ohya Y."/>
            <person name="Lew D.J."/>
        </authorList>
    </citation>
    <scope>FUNCTION</scope>
</reference>
<reference key="17">
    <citation type="journal article" date="2002" name="Mol. Biol. Cell">
        <title>Determinants of Swe1p degradation in Saccharomyces cerevisiae.</title>
        <authorList>
            <person name="McMillan J.N."/>
            <person name="Theesfeld C.L."/>
            <person name="Harrison J.C."/>
            <person name="Bardes E.S.G."/>
            <person name="Lew D.J."/>
        </authorList>
    </citation>
    <scope>FUNCTION</scope>
    <scope>SUBCELLULAR LOCATION</scope>
    <scope>MUTAGENESIS OF 318-ARG--LYS-328; LEU-320; LEU-324; PHE-327; LYS-328; LEU-331; TYR-332; GLU-797; ILE-806 AND GLN-807</scope>
</reference>
<reference key="18">
    <citation type="journal article" date="2003" name="Curr. Biol.">
        <title>Conservation of mechanisms controlling entry into mitosis: budding yeast wee1 delays entry into mitosis and is required for cell size control.</title>
        <authorList>
            <person name="Harvey S.L."/>
            <person name="Kellogg D.R."/>
        </authorList>
    </citation>
    <scope>FUNCTION</scope>
</reference>
<reference key="19">
    <citation type="journal article" date="2003" name="Genes Genet. Syst.">
        <title>The Saccharomyces cerevisiae bud-neck proteins Kcc4 and Gin4 have distinct but partially-overlapping cellular functions.</title>
        <authorList>
            <person name="Okuzaki D."/>
            <person name="Watanabe T."/>
            <person name="Tanaka S."/>
            <person name="Nojima H."/>
        </authorList>
    </citation>
    <scope>INTERACTION WITH KCC4</scope>
</reference>
<reference key="20">
    <citation type="journal article" date="2003" name="J. Cell Sci.">
        <title>In yeast, the pseudohyphal phenotype induced by isoamyl alcohol results from the operation of the morphogenesis checkpoint.</title>
        <authorList>
            <person name="Martinez-Anaya C."/>
            <person name="Dickinson J.R."/>
            <person name="Sudbery P.E."/>
        </authorList>
    </citation>
    <scope>FUNCTION</scope>
</reference>
<reference key="21">
    <citation type="journal article" date="2003" name="Mol. Biol. Cell">
        <title>Induction of S. cerevisiae filamentous differentiation by slowed DNA synthesis involves Mec1, Rad53 and Swe1 checkpoint proteins.</title>
        <authorList>
            <person name="Jiang Y.W."/>
            <person name="Kang C.M."/>
        </authorList>
    </citation>
    <scope>FUNCTION IN FILAMENTOUS GROWTH REGULATION</scope>
</reference>
<reference key="22">
    <citation type="journal article" date="2003" name="Nature">
        <title>Targets of the cyclin-dependent kinase Cdk1.</title>
        <authorList>
            <person name="Ubersax J.A."/>
            <person name="Woodbury E.L."/>
            <person name="Quang P.N."/>
            <person name="Paraz M."/>
            <person name="Blethrow J.D."/>
            <person name="Shah K."/>
            <person name="Shokat K.M."/>
            <person name="Morgan D.O."/>
        </authorList>
    </citation>
    <scope>PHOSPHORYLATION BY CDC28</scope>
</reference>
<reference key="23">
    <citation type="journal article" date="2004" name="Biosci. Biotechnol. Biochem.">
        <title>Effect of ethanol on cell growth of budding yeast: genes that are important for cell growth in the presence of ethanol.</title>
        <authorList>
            <person name="Kubota S."/>
            <person name="Takeo I."/>
            <person name="Kume K."/>
            <person name="Kanai M."/>
            <person name="Shitamukai A."/>
            <person name="Mizunuma M."/>
            <person name="Miyakawa T."/>
            <person name="Shimoi H."/>
            <person name="Iefuji H."/>
            <person name="Hirata D."/>
        </authorList>
    </citation>
    <scope>INDUCTION BY ETHANOL</scope>
</reference>
<reference key="24">
    <citation type="journal article" date="2004" name="Proc. Natl. Acad. Sci. U.S.A.">
        <title>Coupling morphogenesis to mitotic entry.</title>
        <authorList>
            <person name="Sakchaisri K."/>
            <person name="Asano S."/>
            <person name="Yu L.-R."/>
            <person name="Shulewitz M.J."/>
            <person name="Park C.J."/>
            <person name="Park J.-E."/>
            <person name="Cho Y.-W."/>
            <person name="Veenstra T.D."/>
            <person name="Thorner J."/>
            <person name="Lee K.S."/>
        </authorList>
    </citation>
    <scope>PHOSPHORYLATION AT SER-36; SER-102; SER-111; SER-118; THR-131; SER-136; SER-156; SER-169; SER-225; SER-254; THR-280; SER-312; SER-379; SER-395; SER-438; SER-610; THR-629 AND THR-688</scope>
</reference>
<reference key="25">
    <citation type="journal article" date="2004" name="Yeast">
        <title>Localization of proteins that are coordinately expressed with Cln2 during the cell cycle.</title>
        <authorList>
            <person name="Sundin B.A."/>
            <person name="Chiu C.-H."/>
            <person name="Riffle M."/>
            <person name="Davis T.N."/>
            <person name="Muller E.G.D."/>
        </authorList>
    </citation>
    <scope>SUBCELLULAR LOCATION</scope>
</reference>
<reference key="26">
    <citation type="journal article" date="2005" name="Cell">
        <title>Cdk1-dependent regulation of the mitotic inhibitor Wee1.</title>
        <authorList>
            <person name="Harvey S.L."/>
            <person name="Charlet A."/>
            <person name="Haas W."/>
            <person name="Gygi S.P."/>
            <person name="Kellogg D.R."/>
        </authorList>
    </citation>
    <scope>FUNCTION</scope>
    <scope>PHOSPHORYLATION AT SER-36; THR-45; SER-56; SER-63; SER-70; THR-74; SER-105; SER-111; SER-118; THR-121; THR-124; SER-127; SER-133; SER-136; THR-196; SER-201; SER-262; SER-263; SER-266; SER-284; SER-294; SER-345; THR-367; THR-373; SER-379; THR-384; SER-610 AND THR-692</scope>
    <scope>INTERACTION WITH CLB2-CDC28</scope>
</reference>
<reference key="27">
    <citation type="journal article" date="2005" name="Curr. Biol.">
        <title>Swe1p responds to cytoskeletal perturbation, not bud size, in S. cerevisiae.</title>
        <authorList>
            <person name="McNulty J.J."/>
            <person name="Lew D.J."/>
        </authorList>
    </citation>
    <scope>FUNCTION</scope>
</reference>
<reference key="28">
    <citation type="journal article" date="2005" name="EMBO J.">
        <title>Concerted mechanism of Swe1/Wee1 regulation by multiple kinases in budding yeast.</title>
        <authorList>
            <person name="Asano S."/>
            <person name="Park J.-E."/>
            <person name="Sakchaisri K."/>
            <person name="Yu L.-R."/>
            <person name="Song S."/>
            <person name="Supavilai P."/>
            <person name="Veenstra T.D."/>
            <person name="Lee K.S."/>
        </authorList>
    </citation>
    <scope>FUNCTION</scope>
    <scope>PHOSPHORYLATION BY CLB2-CDC28</scope>
</reference>
<reference key="29">
    <citation type="journal article" date="2005" name="Proc. Natl. Acad. Sci. U.S.A.">
        <title>Swe1 regulation and transcriptional control restrict the activity of mitotic cyclins toward replication proteins in Saccharomyces cerevisiae.</title>
        <authorList>
            <person name="Hu F."/>
            <person name="Aparicio O.M."/>
        </authorList>
    </citation>
    <scope>FUNCTION</scope>
</reference>
<reference key="30">
    <citation type="journal article" date="2006" name="Mol. Biol. Cell">
        <title>The function and regulation of budding yeast Swe1 in response to interrupted DNA synthesis.</title>
        <authorList>
            <person name="Liu H."/>
            <person name="Wang Y."/>
        </authorList>
    </citation>
    <scope>FUNCTION</scope>
</reference>
<reference key="31">
    <citation type="journal article" date="2007" name="Curr. Biol.">
        <title>Differential susceptibility of yeast S and M phase CDK complexes to inhibitory tyrosine phosphorylation.</title>
        <authorList>
            <person name="Keaton M.A."/>
            <person name="Bardes E.S.G."/>
            <person name="Marquitz A.R."/>
            <person name="Freel C.D."/>
            <person name="Zyla T.R."/>
            <person name="Rudolph J."/>
            <person name="Lew D.J."/>
        </authorList>
    </citation>
    <scope>PHOSPHORYLATION BY CLB-CDC28</scope>
</reference>
<reference key="32">
    <citation type="journal article" date="2008" name="Mol. Cell. Proteomics">
        <title>A multidimensional chromatography technology for in-depth phosphoproteome analysis.</title>
        <authorList>
            <person name="Albuquerque C.P."/>
            <person name="Smolka M.B."/>
            <person name="Payne S.H."/>
            <person name="Bafna V."/>
            <person name="Eng J."/>
            <person name="Zhou H."/>
        </authorList>
    </citation>
    <scope>IDENTIFICATION BY MASS SPECTROMETRY [LARGE SCALE ANALYSIS]</scope>
</reference>
<reference key="33">
    <citation type="journal article" date="2009" name="Science">
        <title>Global analysis of Cdk1 substrate phosphorylation sites provides insights into evolution.</title>
        <authorList>
            <person name="Holt L.J."/>
            <person name="Tuch B.B."/>
            <person name="Villen J."/>
            <person name="Johnson A.D."/>
            <person name="Gygi S.P."/>
            <person name="Morgan D.O."/>
        </authorList>
    </citation>
    <scope>PHOSPHORYLATION [LARGE SCALE ANALYSIS] AT SER-379</scope>
    <scope>IDENTIFICATION BY MASS SPECTROMETRY [LARGE SCALE ANALYSIS]</scope>
</reference>
<reference key="34">
    <citation type="journal article" date="2012" name="Proteomics">
        <title>Sites of ubiquitin attachment in Saccharomyces cerevisiae.</title>
        <authorList>
            <person name="Starita L.M."/>
            <person name="Lo R.S."/>
            <person name="Eng J.K."/>
            <person name="von Haller P.D."/>
            <person name="Fields S."/>
        </authorList>
    </citation>
    <scope>UBIQUITINATION [LARGE SCALE ANALYSIS] AT LYS-741</scope>
    <scope>IDENTIFICATION BY MASS SPECTROMETRY [LARGE SCALE ANALYSIS]</scope>
</reference>
<organism>
    <name type="scientific">Saccharomyces cerevisiae (strain ATCC 204508 / S288c)</name>
    <name type="common">Baker's yeast</name>
    <dbReference type="NCBI Taxonomy" id="559292"/>
    <lineage>
        <taxon>Eukaryota</taxon>
        <taxon>Fungi</taxon>
        <taxon>Dikarya</taxon>
        <taxon>Ascomycota</taxon>
        <taxon>Saccharomycotina</taxon>
        <taxon>Saccharomycetes</taxon>
        <taxon>Saccharomycetales</taxon>
        <taxon>Saccharomycetaceae</taxon>
        <taxon>Saccharomyces</taxon>
    </lineage>
</organism>
<gene>
    <name type="primary">SWE1</name>
    <name type="ordered locus">YJL187C</name>
    <name type="ORF">J0406</name>
</gene>
<sequence>MSSLDEDEEDFEMLDTENLQFMGKKMFGKQAGEDESDDFAIGGSTPTNKLKFYPYSNNKLTRSTGTLNLSLSNTALSEANSKFLGKIEEEEEEEEEGKDEESVDSRIKRWSPFHENESVTTPITKRSAEKTNSPISLKQWNQRWFPKNDARTENTSSSSSYSVAKPNQSAFTSSGLVSKMSMDTSLYPAKLRIPETPVKKSPLVEGRDHKHVHLSSSKNASSSLSVSPLNFVEDNNLQEDLLFSDSPSSKALPSIHVPTIDSSPLSEAKYHAHDRHNNQTNILSPTNSLVTNSSPQTLHSNKFKKIKRARNSVILKNRELTNSLQQFKDDLYGTDENFPPPIIISSHHSTRKNPQPYQFRGRYDNDTDEEISTPTRRKSIIGATSQTHRESRPLSLSSAIVTNTTSAETHSISSTDSSPLNSKRRLISSNKLSANPDSHLFEKFTNVHSIGKGQFSTVYQVTFAQTNKKYAIKAIKPNKYNSLKRILLEIKILNEVTNQITMDQEGKEYIIDYISSWKFQNSYYIMTELCENGNLDGFLQEQVIAKKKRLEDWRIWKIIVELSLALRFIHDSCHIVHLDLKPANVMITFEGNLKLGDFGMATHLPLEDKSFENEGDREYIAPEIISDCTYDYKADIFSLGLMIVEIAANVVLPDNGNAWHKLRSGDLSDAGRLSSTDIHSESLFSDITKVDTNDLFDFERDNISGNSNNAGTSTVHNNSNINNPNMNNGNDNNNVNTAATKNRLILHKSSKIPAWVPKFLIDGESLERIVRWMIEPNYERRPTANQILQTEECLYVEMTRNAGAIIQEDDFGPKPKFFI</sequence>
<protein>
    <recommendedName>
        <fullName>Mitosis inhibitor protein kinase SWE1</fullName>
        <ecNumber>2.7.11.1</ecNumber>
    </recommendedName>
    <alternativeName>
        <fullName>Wee1 homolog</fullName>
    </alternativeName>
</protein>
<dbReference type="EC" id="2.7.11.1"/>
<dbReference type="EMBL" id="X73966">
    <property type="protein sequence ID" value="CAA52150.1"/>
    <property type="molecule type" value="Genomic_DNA"/>
</dbReference>
<dbReference type="EMBL" id="Z49462">
    <property type="protein sequence ID" value="CAA89482.1"/>
    <property type="molecule type" value="Genomic_DNA"/>
</dbReference>
<dbReference type="EMBL" id="BK006943">
    <property type="protein sequence ID" value="DAA08619.1"/>
    <property type="molecule type" value="Genomic_DNA"/>
</dbReference>
<dbReference type="PIR" id="S40400">
    <property type="entry name" value="S40400"/>
</dbReference>
<dbReference type="RefSeq" id="NP_012348.1">
    <property type="nucleotide sequence ID" value="NM_001181620.1"/>
</dbReference>
<dbReference type="SMR" id="P32944"/>
<dbReference type="BioGRID" id="33575">
    <property type="interactions" value="466"/>
</dbReference>
<dbReference type="DIP" id="DIP-2410N"/>
<dbReference type="ELM" id="P32944"/>
<dbReference type="FunCoup" id="P32944">
    <property type="interactions" value="571"/>
</dbReference>
<dbReference type="IntAct" id="P32944">
    <property type="interactions" value="35"/>
</dbReference>
<dbReference type="MINT" id="P32944"/>
<dbReference type="STRING" id="4932.YJL187C"/>
<dbReference type="iPTMnet" id="P32944"/>
<dbReference type="PaxDb" id="4932-YJL187C"/>
<dbReference type="PeptideAtlas" id="P32944"/>
<dbReference type="EnsemblFungi" id="YJL187C_mRNA">
    <property type="protein sequence ID" value="YJL187C"/>
    <property type="gene ID" value="YJL187C"/>
</dbReference>
<dbReference type="GeneID" id="853252"/>
<dbReference type="KEGG" id="sce:YJL187C"/>
<dbReference type="AGR" id="SGD:S000003723"/>
<dbReference type="SGD" id="S000003723">
    <property type="gene designation" value="SWE1"/>
</dbReference>
<dbReference type="VEuPathDB" id="FungiDB:YJL187C"/>
<dbReference type="eggNOG" id="KOG0601">
    <property type="taxonomic scope" value="Eukaryota"/>
</dbReference>
<dbReference type="GeneTree" id="ENSGT00940000159427"/>
<dbReference type="HOGENOM" id="CLU_007696_0_0_1"/>
<dbReference type="InParanoid" id="P32944"/>
<dbReference type="OMA" id="RFIHDSC"/>
<dbReference type="OrthoDB" id="5337378at2759"/>
<dbReference type="BioCyc" id="YEAST:G3O-31620-MONOMER"/>
<dbReference type="Reactome" id="R-SCE-156711">
    <property type="pathway name" value="Polo-like kinase mediated events"/>
</dbReference>
<dbReference type="BioGRID-ORCS" id="853252">
    <property type="hits" value="0 hits in 13 CRISPR screens"/>
</dbReference>
<dbReference type="PRO" id="PR:P32944"/>
<dbReference type="Proteomes" id="UP000002311">
    <property type="component" value="Chromosome X"/>
</dbReference>
<dbReference type="RNAct" id="P32944">
    <property type="molecule type" value="protein"/>
</dbReference>
<dbReference type="GO" id="GO:0005935">
    <property type="term" value="C:cellular bud neck"/>
    <property type="evidence" value="ECO:0000314"/>
    <property type="project" value="SGD"/>
</dbReference>
<dbReference type="GO" id="GO:0005737">
    <property type="term" value="C:cytoplasm"/>
    <property type="evidence" value="ECO:0000318"/>
    <property type="project" value="GO_Central"/>
</dbReference>
<dbReference type="GO" id="GO:0005634">
    <property type="term" value="C:nucleus"/>
    <property type="evidence" value="ECO:0000314"/>
    <property type="project" value="SGD"/>
</dbReference>
<dbReference type="GO" id="GO:0005524">
    <property type="term" value="F:ATP binding"/>
    <property type="evidence" value="ECO:0007669"/>
    <property type="project" value="UniProtKB-KW"/>
</dbReference>
<dbReference type="GO" id="GO:0046872">
    <property type="term" value="F:metal ion binding"/>
    <property type="evidence" value="ECO:0007669"/>
    <property type="project" value="UniProtKB-KW"/>
</dbReference>
<dbReference type="GO" id="GO:0004672">
    <property type="term" value="F:protein kinase activity"/>
    <property type="evidence" value="ECO:0007005"/>
    <property type="project" value="SGD"/>
</dbReference>
<dbReference type="GO" id="GO:0106310">
    <property type="term" value="F:protein serine kinase activity"/>
    <property type="evidence" value="ECO:0007669"/>
    <property type="project" value="RHEA"/>
</dbReference>
<dbReference type="GO" id="GO:0004674">
    <property type="term" value="F:protein serine/threonine kinase activity"/>
    <property type="evidence" value="ECO:0007669"/>
    <property type="project" value="UniProtKB-KW"/>
</dbReference>
<dbReference type="GO" id="GO:0004713">
    <property type="term" value="F:protein tyrosine kinase activity"/>
    <property type="evidence" value="ECO:0000314"/>
    <property type="project" value="SGD"/>
</dbReference>
<dbReference type="GO" id="GO:0051301">
    <property type="term" value="P:cell division"/>
    <property type="evidence" value="ECO:0007669"/>
    <property type="project" value="UniProtKB-KW"/>
</dbReference>
<dbReference type="GO" id="GO:0000086">
    <property type="term" value="P:G2/M transition of mitotic cell cycle"/>
    <property type="evidence" value="ECO:0000314"/>
    <property type="project" value="SGD"/>
</dbReference>
<dbReference type="GO" id="GO:0051321">
    <property type="term" value="P:meiotic cell cycle"/>
    <property type="evidence" value="ECO:0007669"/>
    <property type="project" value="UniProtKB-KW"/>
</dbReference>
<dbReference type="GO" id="GO:0044879">
    <property type="term" value="P:mitotic morphogenesis checkpoint signaling"/>
    <property type="evidence" value="ECO:0000314"/>
    <property type="project" value="SGD"/>
</dbReference>
<dbReference type="GO" id="GO:0010972">
    <property type="term" value="P:negative regulation of G2/M transition of mitotic cell cycle"/>
    <property type="evidence" value="ECO:0000318"/>
    <property type="project" value="GO_Central"/>
</dbReference>
<dbReference type="GO" id="GO:0110031">
    <property type="term" value="P:negative regulation of G2/MI transition of meiotic cell cycle"/>
    <property type="evidence" value="ECO:0000318"/>
    <property type="project" value="GO_Central"/>
</dbReference>
<dbReference type="GO" id="GO:0010697">
    <property type="term" value="P:negative regulation of mitotic spindle pole body separation"/>
    <property type="evidence" value="ECO:0000315"/>
    <property type="project" value="SGD"/>
</dbReference>
<dbReference type="GO" id="GO:0090154">
    <property type="term" value="P:positive regulation of sphingolipid biosynthetic process"/>
    <property type="evidence" value="ECO:0000315"/>
    <property type="project" value="SGD"/>
</dbReference>
<dbReference type="GO" id="GO:0000320">
    <property type="term" value="P:re-entry into mitotic cell cycle"/>
    <property type="evidence" value="ECO:0000316"/>
    <property type="project" value="SGD"/>
</dbReference>
<dbReference type="GO" id="GO:0008361">
    <property type="term" value="P:regulation of cell size"/>
    <property type="evidence" value="ECO:0007001"/>
    <property type="project" value="SGD"/>
</dbReference>
<dbReference type="GO" id="GO:0040020">
    <property type="term" value="P:regulation of meiotic nuclear division"/>
    <property type="evidence" value="ECO:0000315"/>
    <property type="project" value="SGD"/>
</dbReference>
<dbReference type="CDD" id="cd14052">
    <property type="entry name" value="PTKc_Wee1_fungi"/>
    <property type="match status" value="1"/>
</dbReference>
<dbReference type="FunFam" id="3.30.200.20:FF:000754">
    <property type="entry name" value="Tyrosine kinase"/>
    <property type="match status" value="1"/>
</dbReference>
<dbReference type="Gene3D" id="3.30.200.20">
    <property type="entry name" value="Phosphorylase Kinase, domain 1"/>
    <property type="match status" value="1"/>
</dbReference>
<dbReference type="Gene3D" id="1.10.510.10">
    <property type="entry name" value="Transferase(Phosphotransferase) domain 1"/>
    <property type="match status" value="1"/>
</dbReference>
<dbReference type="InterPro" id="IPR050339">
    <property type="entry name" value="CC_SR_Kinase"/>
</dbReference>
<dbReference type="InterPro" id="IPR011009">
    <property type="entry name" value="Kinase-like_dom_sf"/>
</dbReference>
<dbReference type="InterPro" id="IPR000719">
    <property type="entry name" value="Prot_kinase_dom"/>
</dbReference>
<dbReference type="InterPro" id="IPR017441">
    <property type="entry name" value="Protein_kinase_ATP_BS"/>
</dbReference>
<dbReference type="InterPro" id="IPR008271">
    <property type="entry name" value="Ser/Thr_kinase_AS"/>
</dbReference>
<dbReference type="PANTHER" id="PTHR11042">
    <property type="entry name" value="EUKARYOTIC TRANSLATION INITIATION FACTOR 2-ALPHA KINASE EIF2-ALPHA KINASE -RELATED"/>
    <property type="match status" value="1"/>
</dbReference>
<dbReference type="PANTHER" id="PTHR11042:SF196">
    <property type="entry name" value="MITOSIS INHIBITOR PROTEIN KINASE SWE1"/>
    <property type="match status" value="1"/>
</dbReference>
<dbReference type="Pfam" id="PF00069">
    <property type="entry name" value="Pkinase"/>
    <property type="match status" value="1"/>
</dbReference>
<dbReference type="SMART" id="SM00220">
    <property type="entry name" value="S_TKc"/>
    <property type="match status" value="1"/>
</dbReference>
<dbReference type="SUPFAM" id="SSF56112">
    <property type="entry name" value="Protein kinase-like (PK-like)"/>
    <property type="match status" value="1"/>
</dbReference>
<dbReference type="PROSITE" id="PS00107">
    <property type="entry name" value="PROTEIN_KINASE_ATP"/>
    <property type="match status" value="1"/>
</dbReference>
<dbReference type="PROSITE" id="PS50011">
    <property type="entry name" value="PROTEIN_KINASE_DOM"/>
    <property type="match status" value="1"/>
</dbReference>
<dbReference type="PROSITE" id="PS00108">
    <property type="entry name" value="PROTEIN_KINASE_ST"/>
    <property type="match status" value="1"/>
</dbReference>
<comment type="function">
    <text evidence="5 6 7 8 9 10 13 14 16 17 21 22 23 24 25 27 29 31">Protein kinase that acts as a negative regulator of entry into mitosis (G2 to M transition) by phosphorylating and inhibiting the mitosis-promoting cyclin B-bound CDC28 at 'Tyr-19'. SWE1-mediated inhibition of CDC28 acts in a cell size or morphogenesis checkpoint to delay mitosis in response to defects in growth, actin organization or bud formation. Inhibits the activity of B-type cyclins in replication initiation strongly for CLB2, moderately for CLB3 and CLB4, and there is no apparent inhibition for CLB5 and CLB6, correlating with the normal expression timing of those cyclins. Hyperphosphorylation and degradation of SWE1 when all checkpoint requirement are met releases CLB2-CDC28 from inhibition and allows for progression through the cell cycle. SWE1-dependent CDC28 phosphorylation is also required for pachytene arrest upon activation of the recombination checkpoint during meiosis. Also involved in the regulation of nitrogen starvation- and short chain alcohol-induced filamentous growth, or filamentous differentiation in response to slowed DNA synthesis. Can act both on serines and on tyrosines.</text>
</comment>
<comment type="catalytic activity">
    <reaction>
        <text>L-seryl-[protein] + ATP = O-phospho-L-seryl-[protein] + ADP + H(+)</text>
        <dbReference type="Rhea" id="RHEA:17989"/>
        <dbReference type="Rhea" id="RHEA-COMP:9863"/>
        <dbReference type="Rhea" id="RHEA-COMP:11604"/>
        <dbReference type="ChEBI" id="CHEBI:15378"/>
        <dbReference type="ChEBI" id="CHEBI:29999"/>
        <dbReference type="ChEBI" id="CHEBI:30616"/>
        <dbReference type="ChEBI" id="CHEBI:83421"/>
        <dbReference type="ChEBI" id="CHEBI:456216"/>
        <dbReference type="EC" id="2.7.11.1"/>
    </reaction>
</comment>
<comment type="catalytic activity">
    <reaction>
        <text>L-threonyl-[protein] + ATP = O-phospho-L-threonyl-[protein] + ADP + H(+)</text>
        <dbReference type="Rhea" id="RHEA:46608"/>
        <dbReference type="Rhea" id="RHEA-COMP:11060"/>
        <dbReference type="Rhea" id="RHEA-COMP:11605"/>
        <dbReference type="ChEBI" id="CHEBI:15378"/>
        <dbReference type="ChEBI" id="CHEBI:30013"/>
        <dbReference type="ChEBI" id="CHEBI:30616"/>
        <dbReference type="ChEBI" id="CHEBI:61977"/>
        <dbReference type="ChEBI" id="CHEBI:456216"/>
        <dbReference type="EC" id="2.7.11.1"/>
    </reaction>
</comment>
<comment type="subunit">
    <text evidence="6 7 11 12 15 23 30">Interacts with CLB2-CDC28. Partial hyperphosphorylation of SWE1 by CLB2-CDC28 stabilizes the ternary complex of SWE1 and CLB2-CDC28 and stimulates kinase activity of SWE1 in a positive feedback loop, maintaining CLB2-CDC28 in the tyrosine-phosphorylated state. Fully hyperphosphorylated SWE1 dissociates from CLB2-CDC28. Interacts with HSL7, KCC4 and MET30.</text>
</comment>
<comment type="interaction">
    <interactant intactId="EBI-18607">
        <id>P32944</id>
    </interactant>
    <interactant intactId="EBI-4192">
        <id>Q00684</id>
        <label>CDC14</label>
    </interactant>
    <organismsDiffer>false</organismsDiffer>
    <experiments>3</experiments>
</comment>
<comment type="interaction">
    <interactant intactId="EBI-18607">
        <id>P32944</id>
    </interactant>
    <interactant intactId="EBI-4440">
        <id>P32562</id>
        <label>CDC5</label>
    </interactant>
    <organismsDiffer>false</organismsDiffer>
    <experiments>4</experiments>
</comment>
<comment type="interaction">
    <interactant intactId="EBI-18607">
        <id>P32944</id>
    </interactant>
    <interactant intactId="EBI-21618">
        <id>P38274</id>
        <label>HSL7</label>
    </interactant>
    <organismsDiffer>false</organismsDiffer>
    <experiments>4</experiments>
</comment>
<comment type="interaction">
    <interactant intactId="EBI-18607">
        <id>P32944</id>
    </interactant>
    <interactant intactId="EBI-9716">
        <id>P13185</id>
        <label>KIN1</label>
    </interactant>
    <organismsDiffer>false</organismsDiffer>
    <experiments>3</experiments>
</comment>
<comment type="subcellular location">
    <subcellularLocation>
        <location>Bud neck</location>
    </subcellularLocation>
    <subcellularLocation>
        <location>Nucleus</location>
    </subcellularLocation>
    <text>When SWE1 first accumulates in G1, it is localized to the nucleus. After bud emergence, a subpopulation is recruited to the daughter side of the mother-bud neck through HSL1 and its adapter HSL7, where it is susceptible to hyperphosphorylation and degradation.</text>
</comment>
<comment type="induction">
    <text evidence="8 20 28 29 31">Expressed periodically during the cell cycle, with a peak in late G1. Transcriptional repression requires ZDS1. Protein accumulation is also periodic, peaking during S/G2 and declining prior to and during nuclear division of the unperturbed cell cycle. Stabilized during a checkpoint response in G2. Induced during meiosis. Induced by ethanol (at protein level).</text>
</comment>
<comment type="PTM">
    <text evidence="30">Ubiquitinated by the SCF(MET30) complex, leading to its degradation by the proteasome.</text>
</comment>
<comment type="PTM">
    <text evidence="18 19 21 23 26 27 31">Phosphorylated progressively by CLA4, CLB2-CDC28 and CDC5. CLA4-dependent phosphorylation occurs in late S phase, followed by phosphorylation by CLB2-CDC28 in early G2, when the levels of mitotic CLB2 increases. This phosphorylation is critical for triggering subsequent SWE1-CDC5 interaction and CDC5-dependent phosphorylation. The resulting cumulative hyperphosphorylation down-regulates SWE1 by targeting it for ubiquitin-mediated degradation. This stepwise phosphorylation is thought to be a mechanism to integrate the different checkpoint requirements before entry into mitosis.</text>
</comment>
<comment type="similarity">
    <text evidence="2">Belongs to the protein kinase superfamily. Ser/Thr protein kinase family. WEE1 subfamily.</text>
</comment>
<keyword id="KW-0067">ATP-binding</keyword>
<keyword id="KW-0131">Cell cycle</keyword>
<keyword id="KW-0132">Cell division</keyword>
<keyword id="KW-1017">Isopeptide bond</keyword>
<keyword id="KW-0418">Kinase</keyword>
<keyword id="KW-0460">Magnesium</keyword>
<keyword id="KW-0469">Meiosis</keyword>
<keyword id="KW-0479">Metal-binding</keyword>
<keyword id="KW-0498">Mitosis</keyword>
<keyword id="KW-0547">Nucleotide-binding</keyword>
<keyword id="KW-0539">Nucleus</keyword>
<keyword id="KW-0597">Phosphoprotein</keyword>
<keyword id="KW-1185">Reference proteome</keyword>
<keyword id="KW-0723">Serine/threonine-protein kinase</keyword>
<keyword id="KW-0808">Transferase</keyword>
<keyword id="KW-0829">Tyrosine-protein kinase</keyword>
<keyword id="KW-0832">Ubl conjugation</keyword>